<organism>
    <name type="scientific">Kineococcus radiotolerans (strain ATCC BAA-149 / DSM 14245 / SRS30216)</name>
    <dbReference type="NCBI Taxonomy" id="266940"/>
    <lineage>
        <taxon>Bacteria</taxon>
        <taxon>Bacillati</taxon>
        <taxon>Actinomycetota</taxon>
        <taxon>Actinomycetes</taxon>
        <taxon>Kineosporiales</taxon>
        <taxon>Kineosporiaceae</taxon>
        <taxon>Kineococcus</taxon>
    </lineage>
</organism>
<feature type="chain" id="PRO_1000077162" description="ATP-dependent Clp protease ATP-binding subunit ClpX">
    <location>
        <begin position="1"/>
        <end position="430"/>
    </location>
</feature>
<feature type="domain" description="ClpX-type ZB" evidence="2">
    <location>
        <begin position="1"/>
        <end position="54"/>
    </location>
</feature>
<feature type="binding site" evidence="2">
    <location>
        <position position="13"/>
    </location>
    <ligand>
        <name>Zn(2+)</name>
        <dbReference type="ChEBI" id="CHEBI:29105"/>
    </ligand>
</feature>
<feature type="binding site" evidence="2">
    <location>
        <position position="16"/>
    </location>
    <ligand>
        <name>Zn(2+)</name>
        <dbReference type="ChEBI" id="CHEBI:29105"/>
    </ligand>
</feature>
<feature type="binding site" evidence="2">
    <location>
        <position position="35"/>
    </location>
    <ligand>
        <name>Zn(2+)</name>
        <dbReference type="ChEBI" id="CHEBI:29105"/>
    </ligand>
</feature>
<feature type="binding site" evidence="2">
    <location>
        <position position="38"/>
    </location>
    <ligand>
        <name>Zn(2+)</name>
        <dbReference type="ChEBI" id="CHEBI:29105"/>
    </ligand>
</feature>
<feature type="binding site" evidence="1">
    <location>
        <begin position="122"/>
        <end position="129"/>
    </location>
    <ligand>
        <name>ATP</name>
        <dbReference type="ChEBI" id="CHEBI:30616"/>
    </ligand>
</feature>
<accession>A6WDT9</accession>
<evidence type="ECO:0000255" key="1">
    <source>
        <dbReference type="HAMAP-Rule" id="MF_00175"/>
    </source>
</evidence>
<evidence type="ECO:0000255" key="2">
    <source>
        <dbReference type="PROSITE-ProRule" id="PRU01250"/>
    </source>
</evidence>
<name>CLPX_KINRD</name>
<proteinExistence type="inferred from homology"/>
<protein>
    <recommendedName>
        <fullName evidence="1">ATP-dependent Clp protease ATP-binding subunit ClpX</fullName>
    </recommendedName>
</protein>
<dbReference type="EMBL" id="CP000750">
    <property type="protein sequence ID" value="ABS04978.1"/>
    <property type="molecule type" value="Genomic_DNA"/>
</dbReference>
<dbReference type="RefSeq" id="WP_012086762.1">
    <property type="nucleotide sequence ID" value="NC_009664.2"/>
</dbReference>
<dbReference type="SMR" id="A6WDT9"/>
<dbReference type="STRING" id="266940.Krad_3515"/>
<dbReference type="KEGG" id="kra:Krad_3515"/>
<dbReference type="eggNOG" id="COG1219">
    <property type="taxonomic scope" value="Bacteria"/>
</dbReference>
<dbReference type="HOGENOM" id="CLU_014218_8_2_11"/>
<dbReference type="OrthoDB" id="9804062at2"/>
<dbReference type="Proteomes" id="UP000001116">
    <property type="component" value="Chromosome"/>
</dbReference>
<dbReference type="GO" id="GO:0009376">
    <property type="term" value="C:HslUV protease complex"/>
    <property type="evidence" value="ECO:0007669"/>
    <property type="project" value="TreeGrafter"/>
</dbReference>
<dbReference type="GO" id="GO:0005524">
    <property type="term" value="F:ATP binding"/>
    <property type="evidence" value="ECO:0007669"/>
    <property type="project" value="UniProtKB-UniRule"/>
</dbReference>
<dbReference type="GO" id="GO:0016887">
    <property type="term" value="F:ATP hydrolysis activity"/>
    <property type="evidence" value="ECO:0007669"/>
    <property type="project" value="InterPro"/>
</dbReference>
<dbReference type="GO" id="GO:0140662">
    <property type="term" value="F:ATP-dependent protein folding chaperone"/>
    <property type="evidence" value="ECO:0007669"/>
    <property type="project" value="InterPro"/>
</dbReference>
<dbReference type="GO" id="GO:0046983">
    <property type="term" value="F:protein dimerization activity"/>
    <property type="evidence" value="ECO:0007669"/>
    <property type="project" value="InterPro"/>
</dbReference>
<dbReference type="GO" id="GO:0051082">
    <property type="term" value="F:unfolded protein binding"/>
    <property type="evidence" value="ECO:0007669"/>
    <property type="project" value="UniProtKB-UniRule"/>
</dbReference>
<dbReference type="GO" id="GO:0008270">
    <property type="term" value="F:zinc ion binding"/>
    <property type="evidence" value="ECO:0007669"/>
    <property type="project" value="InterPro"/>
</dbReference>
<dbReference type="GO" id="GO:0051301">
    <property type="term" value="P:cell division"/>
    <property type="evidence" value="ECO:0007669"/>
    <property type="project" value="TreeGrafter"/>
</dbReference>
<dbReference type="GO" id="GO:0051603">
    <property type="term" value="P:proteolysis involved in protein catabolic process"/>
    <property type="evidence" value="ECO:0007669"/>
    <property type="project" value="TreeGrafter"/>
</dbReference>
<dbReference type="CDD" id="cd19497">
    <property type="entry name" value="RecA-like_ClpX"/>
    <property type="match status" value="1"/>
</dbReference>
<dbReference type="FunFam" id="1.10.8.60:FF:000002">
    <property type="entry name" value="ATP-dependent Clp protease ATP-binding subunit ClpX"/>
    <property type="match status" value="1"/>
</dbReference>
<dbReference type="FunFam" id="3.40.50.300:FF:000005">
    <property type="entry name" value="ATP-dependent Clp protease ATP-binding subunit ClpX"/>
    <property type="match status" value="1"/>
</dbReference>
<dbReference type="Gene3D" id="1.10.8.60">
    <property type="match status" value="1"/>
</dbReference>
<dbReference type="Gene3D" id="6.20.220.10">
    <property type="entry name" value="ClpX chaperone, C4-type zinc finger domain"/>
    <property type="match status" value="1"/>
</dbReference>
<dbReference type="Gene3D" id="3.40.50.300">
    <property type="entry name" value="P-loop containing nucleotide triphosphate hydrolases"/>
    <property type="match status" value="1"/>
</dbReference>
<dbReference type="HAMAP" id="MF_00175">
    <property type="entry name" value="ClpX"/>
    <property type="match status" value="1"/>
</dbReference>
<dbReference type="InterPro" id="IPR003593">
    <property type="entry name" value="AAA+_ATPase"/>
</dbReference>
<dbReference type="InterPro" id="IPR050052">
    <property type="entry name" value="ATP-dep_Clp_protease_ClpX"/>
</dbReference>
<dbReference type="InterPro" id="IPR003959">
    <property type="entry name" value="ATPase_AAA_core"/>
</dbReference>
<dbReference type="InterPro" id="IPR019489">
    <property type="entry name" value="Clp_ATPase_C"/>
</dbReference>
<dbReference type="InterPro" id="IPR004487">
    <property type="entry name" value="Clp_protease_ATP-bd_su_ClpX"/>
</dbReference>
<dbReference type="InterPro" id="IPR046425">
    <property type="entry name" value="ClpX_bact"/>
</dbReference>
<dbReference type="InterPro" id="IPR027417">
    <property type="entry name" value="P-loop_NTPase"/>
</dbReference>
<dbReference type="InterPro" id="IPR010603">
    <property type="entry name" value="Znf_CppX_C4"/>
</dbReference>
<dbReference type="InterPro" id="IPR038366">
    <property type="entry name" value="Znf_CppX_C4_sf"/>
</dbReference>
<dbReference type="NCBIfam" id="TIGR00382">
    <property type="entry name" value="clpX"/>
    <property type="match status" value="1"/>
</dbReference>
<dbReference type="NCBIfam" id="NF003745">
    <property type="entry name" value="PRK05342.1"/>
    <property type="match status" value="1"/>
</dbReference>
<dbReference type="PANTHER" id="PTHR48102:SF7">
    <property type="entry name" value="ATP-DEPENDENT CLP PROTEASE ATP-BINDING SUBUNIT CLPX-LIKE, MITOCHONDRIAL"/>
    <property type="match status" value="1"/>
</dbReference>
<dbReference type="PANTHER" id="PTHR48102">
    <property type="entry name" value="ATP-DEPENDENT CLP PROTEASE ATP-BINDING SUBUNIT CLPX-LIKE, MITOCHONDRIAL-RELATED"/>
    <property type="match status" value="1"/>
</dbReference>
<dbReference type="Pfam" id="PF07724">
    <property type="entry name" value="AAA_2"/>
    <property type="match status" value="1"/>
</dbReference>
<dbReference type="Pfam" id="PF10431">
    <property type="entry name" value="ClpB_D2-small"/>
    <property type="match status" value="1"/>
</dbReference>
<dbReference type="Pfam" id="PF06689">
    <property type="entry name" value="zf-C4_ClpX"/>
    <property type="match status" value="1"/>
</dbReference>
<dbReference type="SMART" id="SM00382">
    <property type="entry name" value="AAA"/>
    <property type="match status" value="1"/>
</dbReference>
<dbReference type="SMART" id="SM01086">
    <property type="entry name" value="ClpB_D2-small"/>
    <property type="match status" value="1"/>
</dbReference>
<dbReference type="SMART" id="SM00994">
    <property type="entry name" value="zf-C4_ClpX"/>
    <property type="match status" value="1"/>
</dbReference>
<dbReference type="SUPFAM" id="SSF57716">
    <property type="entry name" value="Glucocorticoid receptor-like (DNA-binding domain)"/>
    <property type="match status" value="1"/>
</dbReference>
<dbReference type="SUPFAM" id="SSF52540">
    <property type="entry name" value="P-loop containing nucleoside triphosphate hydrolases"/>
    <property type="match status" value="1"/>
</dbReference>
<dbReference type="PROSITE" id="PS51902">
    <property type="entry name" value="CLPX_ZB"/>
    <property type="match status" value="1"/>
</dbReference>
<reference key="1">
    <citation type="journal article" date="2008" name="PLoS ONE">
        <title>Survival in nuclear waste, extreme resistance, and potential applications gleaned from the genome sequence of Kineococcus radiotolerans SRS30216.</title>
        <authorList>
            <person name="Bagwell C.E."/>
            <person name="Bhat S."/>
            <person name="Hawkins G.M."/>
            <person name="Smith B.W."/>
            <person name="Biswas T."/>
            <person name="Hoover T.R."/>
            <person name="Saunders E."/>
            <person name="Han C.S."/>
            <person name="Tsodikov O.V."/>
            <person name="Shimkets L.J."/>
        </authorList>
    </citation>
    <scope>NUCLEOTIDE SEQUENCE [LARGE SCALE GENOMIC DNA]</scope>
    <source>
        <strain>ATCC BAA-149 / DSM 14245 / SRS30216</strain>
    </source>
</reference>
<gene>
    <name evidence="1" type="primary">clpX</name>
    <name type="ordered locus">Krad_3515</name>
</gene>
<keyword id="KW-0067">ATP-binding</keyword>
<keyword id="KW-0143">Chaperone</keyword>
<keyword id="KW-0479">Metal-binding</keyword>
<keyword id="KW-0547">Nucleotide-binding</keyword>
<keyword id="KW-1185">Reference proteome</keyword>
<keyword id="KW-0862">Zinc</keyword>
<sequence>MARIGDGGDLLKCSFCGKSQKQVKKLIAGPGVYICDECIDLCNEIIEEELAEANDLGLVELPKPKEIFDFLDQYVIGQSSAKKSLAVAVYNHYKRIQVGEPSTKGREDAVEISKSNILLIGPTGCGKTYLAQTLAKMLNVPFAIADATALTEAGYVGEDVENILLKLIQAADYDVKKAETGIIYIDEVDKIARKSENPSITRDVSGEGVQQALLKILEGTTASVPPQGGRKHPHQEFIQIDTTNVLFIVGGAFAGLDRIIEARSGKQGLGFGAQLRSTTEKKAEPSFADVMPEDLMKFGLIPEFIGRLPIITSVENLDQEALVQILTKPRNALAKQYQRMFELDGVELEFTDDALEAVADQAILRGTGARGLRAIIEEVLLPVMFDVPSRDDIARVVVTREVVLKNVNPTLVPREAPARKPTRERREKSA</sequence>
<comment type="function">
    <text evidence="1">ATP-dependent specificity component of the Clp protease. It directs the protease to specific substrates. Can perform chaperone functions in the absence of ClpP.</text>
</comment>
<comment type="subunit">
    <text evidence="1">Component of the ClpX-ClpP complex. Forms a hexameric ring that, in the presence of ATP, binds to fourteen ClpP subunits assembled into a disk-like structure with a central cavity, resembling the structure of eukaryotic proteasomes.</text>
</comment>
<comment type="similarity">
    <text evidence="1">Belongs to the ClpX chaperone family.</text>
</comment>